<protein>
    <recommendedName>
        <fullName evidence="1">L-lactate dehydrogenase</fullName>
        <shortName evidence="1">L-LDH</shortName>
        <ecNumber evidence="1">1.1.1.27</ecNumber>
    </recommendedName>
</protein>
<comment type="function">
    <text evidence="1">Catalyzes the conversion of lactate to pyruvate.</text>
</comment>
<comment type="catalytic activity">
    <reaction evidence="1">
        <text>(S)-lactate + NAD(+) = pyruvate + NADH + H(+)</text>
        <dbReference type="Rhea" id="RHEA:23444"/>
        <dbReference type="ChEBI" id="CHEBI:15361"/>
        <dbReference type="ChEBI" id="CHEBI:15378"/>
        <dbReference type="ChEBI" id="CHEBI:16651"/>
        <dbReference type="ChEBI" id="CHEBI:57540"/>
        <dbReference type="ChEBI" id="CHEBI:57945"/>
        <dbReference type="EC" id="1.1.1.27"/>
    </reaction>
</comment>
<comment type="activity regulation">
    <text evidence="1">Allosterically activated by fructose 1,6-bisphosphate (FBP).</text>
</comment>
<comment type="pathway">
    <text evidence="1">Fermentation; pyruvate fermentation to lactate; (S)-lactate from pyruvate: step 1/1.</text>
</comment>
<comment type="subunit">
    <text evidence="1">Homotetramer.</text>
</comment>
<comment type="subcellular location">
    <subcellularLocation>
        <location evidence="1">Cytoplasm</location>
    </subcellularLocation>
</comment>
<comment type="similarity">
    <text evidence="1">Belongs to the LDH/MDH superfamily. LDH family.</text>
</comment>
<accession>Q5WE04</accession>
<sequence>MVRTPSKAKRDRVVVIGTGHVGSSYAFALMNQGVAKELVIIDIDQEKASGDVMDLNHGQAFAPSVTSIWHGNYEDCKEADVVCISAGANQKPGETRLDLLEKNVIIFKEVVDAVMASGFNGIFLVATNPVDLLTQATQVFSGLPKKRVIGSGTTLDTARLRFMLGEYFQISAKHVHAYVVGEHGDSALPLWSTATIGNVPLSQYLLRNRAYKKADLDDIFTNVRDAAYEIIHKKGATYYGIAMSLVRITKALLKNEHAVMTVSTFLNGEFGAKEVCIAVPAIVNRNGVREVLELKLNDIERQQFTESVQMLKGTYKTIMQTGHSF</sequence>
<proteinExistence type="inferred from homology"/>
<keyword id="KW-0021">Allosteric enzyme</keyword>
<keyword id="KW-0963">Cytoplasm</keyword>
<keyword id="KW-0520">NAD</keyword>
<keyword id="KW-0560">Oxidoreductase</keyword>
<keyword id="KW-0597">Phosphoprotein</keyword>
<keyword id="KW-1185">Reference proteome</keyword>
<evidence type="ECO:0000255" key="1">
    <source>
        <dbReference type="HAMAP-Rule" id="MF_00488"/>
    </source>
</evidence>
<name>LDH_SHOC1</name>
<dbReference type="EC" id="1.1.1.27" evidence="1"/>
<dbReference type="EMBL" id="AP006627">
    <property type="protein sequence ID" value="BAD65406.1"/>
    <property type="molecule type" value="Genomic_DNA"/>
</dbReference>
<dbReference type="RefSeq" id="WP_011247714.1">
    <property type="nucleotide sequence ID" value="NC_006582.1"/>
</dbReference>
<dbReference type="SMR" id="Q5WE04"/>
<dbReference type="STRING" id="66692.ABC2872"/>
<dbReference type="KEGG" id="bcl:ABC2872"/>
<dbReference type="eggNOG" id="COG0039">
    <property type="taxonomic scope" value="Bacteria"/>
</dbReference>
<dbReference type="HOGENOM" id="CLU_045401_1_1_9"/>
<dbReference type="OrthoDB" id="9802969at2"/>
<dbReference type="UniPathway" id="UPA00554">
    <property type="reaction ID" value="UER00611"/>
</dbReference>
<dbReference type="Proteomes" id="UP000001168">
    <property type="component" value="Chromosome"/>
</dbReference>
<dbReference type="GO" id="GO:0005737">
    <property type="term" value="C:cytoplasm"/>
    <property type="evidence" value="ECO:0007669"/>
    <property type="project" value="UniProtKB-SubCell"/>
</dbReference>
<dbReference type="GO" id="GO:0004459">
    <property type="term" value="F:L-lactate dehydrogenase activity"/>
    <property type="evidence" value="ECO:0007669"/>
    <property type="project" value="UniProtKB-UniRule"/>
</dbReference>
<dbReference type="GO" id="GO:0006096">
    <property type="term" value="P:glycolytic process"/>
    <property type="evidence" value="ECO:0007669"/>
    <property type="project" value="UniProtKB-UniRule"/>
</dbReference>
<dbReference type="GO" id="GO:0006089">
    <property type="term" value="P:lactate metabolic process"/>
    <property type="evidence" value="ECO:0007669"/>
    <property type="project" value="TreeGrafter"/>
</dbReference>
<dbReference type="CDD" id="cd05291">
    <property type="entry name" value="HicDH_like"/>
    <property type="match status" value="1"/>
</dbReference>
<dbReference type="FunFam" id="3.40.50.720:FF:000018">
    <property type="entry name" value="Malate dehydrogenase"/>
    <property type="match status" value="1"/>
</dbReference>
<dbReference type="Gene3D" id="3.90.110.10">
    <property type="entry name" value="Lactate dehydrogenase/glycoside hydrolase, family 4, C-terminal"/>
    <property type="match status" value="1"/>
</dbReference>
<dbReference type="Gene3D" id="3.40.50.720">
    <property type="entry name" value="NAD(P)-binding Rossmann-like Domain"/>
    <property type="match status" value="1"/>
</dbReference>
<dbReference type="HAMAP" id="MF_00488">
    <property type="entry name" value="Lactate_dehydrog"/>
    <property type="match status" value="1"/>
</dbReference>
<dbReference type="InterPro" id="IPR001557">
    <property type="entry name" value="L-lactate/malate_DH"/>
</dbReference>
<dbReference type="InterPro" id="IPR011304">
    <property type="entry name" value="L-lactate_DH"/>
</dbReference>
<dbReference type="InterPro" id="IPR018177">
    <property type="entry name" value="L-lactate_DH_AS"/>
</dbReference>
<dbReference type="InterPro" id="IPR022383">
    <property type="entry name" value="Lactate/malate_DH_C"/>
</dbReference>
<dbReference type="InterPro" id="IPR001236">
    <property type="entry name" value="Lactate/malate_DH_N"/>
</dbReference>
<dbReference type="InterPro" id="IPR015955">
    <property type="entry name" value="Lactate_DH/Glyco_Ohase_4_C"/>
</dbReference>
<dbReference type="InterPro" id="IPR036291">
    <property type="entry name" value="NAD(P)-bd_dom_sf"/>
</dbReference>
<dbReference type="NCBIfam" id="TIGR01771">
    <property type="entry name" value="L-LDH-NAD"/>
    <property type="match status" value="1"/>
</dbReference>
<dbReference type="NCBIfam" id="NF000824">
    <property type="entry name" value="PRK00066.1"/>
    <property type="match status" value="1"/>
</dbReference>
<dbReference type="NCBIfam" id="NF004863">
    <property type="entry name" value="PRK06223.1"/>
    <property type="match status" value="1"/>
</dbReference>
<dbReference type="PANTHER" id="PTHR43128">
    <property type="entry name" value="L-2-HYDROXYCARBOXYLATE DEHYDROGENASE (NAD(P)(+))"/>
    <property type="match status" value="1"/>
</dbReference>
<dbReference type="PANTHER" id="PTHR43128:SF16">
    <property type="entry name" value="L-LACTATE DEHYDROGENASE"/>
    <property type="match status" value="1"/>
</dbReference>
<dbReference type="Pfam" id="PF02866">
    <property type="entry name" value="Ldh_1_C"/>
    <property type="match status" value="1"/>
</dbReference>
<dbReference type="Pfam" id="PF00056">
    <property type="entry name" value="Ldh_1_N"/>
    <property type="match status" value="1"/>
</dbReference>
<dbReference type="PIRSF" id="PIRSF000102">
    <property type="entry name" value="Lac_mal_DH"/>
    <property type="match status" value="1"/>
</dbReference>
<dbReference type="PRINTS" id="PR00086">
    <property type="entry name" value="LLDHDRGNASE"/>
</dbReference>
<dbReference type="SUPFAM" id="SSF56327">
    <property type="entry name" value="LDH C-terminal domain-like"/>
    <property type="match status" value="1"/>
</dbReference>
<dbReference type="SUPFAM" id="SSF51735">
    <property type="entry name" value="NAD(P)-binding Rossmann-fold domains"/>
    <property type="match status" value="1"/>
</dbReference>
<dbReference type="PROSITE" id="PS00064">
    <property type="entry name" value="L_LDH"/>
    <property type="match status" value="1"/>
</dbReference>
<feature type="chain" id="PRO_0000237539" description="L-lactate dehydrogenase">
    <location>
        <begin position="1"/>
        <end position="325"/>
    </location>
</feature>
<feature type="active site" description="Proton acceptor" evidence="1">
    <location>
        <position position="183"/>
    </location>
</feature>
<feature type="binding site" evidence="1">
    <location>
        <position position="21"/>
    </location>
    <ligand>
        <name>NAD(+)</name>
        <dbReference type="ChEBI" id="CHEBI:57540"/>
    </ligand>
</feature>
<feature type="binding site" evidence="1">
    <location>
        <position position="42"/>
    </location>
    <ligand>
        <name>NAD(+)</name>
        <dbReference type="ChEBI" id="CHEBI:57540"/>
    </ligand>
</feature>
<feature type="binding site" evidence="1">
    <location>
        <position position="47"/>
    </location>
    <ligand>
        <name>NAD(+)</name>
        <dbReference type="ChEBI" id="CHEBI:57540"/>
    </ligand>
</feature>
<feature type="binding site" evidence="1">
    <location>
        <position position="73"/>
    </location>
    <ligand>
        <name>NAD(+)</name>
        <dbReference type="ChEBI" id="CHEBI:57540"/>
    </ligand>
</feature>
<feature type="binding site" evidence="1">
    <location>
        <begin position="87"/>
        <end position="88"/>
    </location>
    <ligand>
        <name>NAD(+)</name>
        <dbReference type="ChEBI" id="CHEBI:57540"/>
    </ligand>
</feature>
<feature type="binding site" evidence="1">
    <location>
        <position position="90"/>
    </location>
    <ligand>
        <name>substrate</name>
    </ligand>
</feature>
<feature type="binding site" evidence="1">
    <location>
        <position position="96"/>
    </location>
    <ligand>
        <name>substrate</name>
    </ligand>
</feature>
<feature type="binding site" evidence="1">
    <location>
        <begin position="126"/>
        <end position="128"/>
    </location>
    <ligand>
        <name>NAD(+)</name>
        <dbReference type="ChEBI" id="CHEBI:57540"/>
    </ligand>
</feature>
<feature type="binding site" evidence="1">
    <location>
        <begin position="128"/>
        <end position="131"/>
    </location>
    <ligand>
        <name>substrate</name>
    </ligand>
</feature>
<feature type="binding site" evidence="1">
    <location>
        <position position="151"/>
    </location>
    <ligand>
        <name>NAD(+)</name>
        <dbReference type="ChEBI" id="CHEBI:57540"/>
    </ligand>
</feature>
<feature type="binding site" evidence="1">
    <location>
        <begin position="156"/>
        <end position="159"/>
    </location>
    <ligand>
        <name>substrate</name>
    </ligand>
</feature>
<feature type="binding site" evidence="1">
    <location>
        <position position="161"/>
    </location>
    <ligand>
        <name>beta-D-fructose 1,6-bisphosphate</name>
        <dbReference type="ChEBI" id="CHEBI:32966"/>
        <note>allosteric activator</note>
    </ligand>
</feature>
<feature type="binding site" evidence="1">
    <location>
        <position position="176"/>
    </location>
    <ligand>
        <name>beta-D-fructose 1,6-bisphosphate</name>
        <dbReference type="ChEBI" id="CHEBI:32966"/>
        <note>allosteric activator</note>
    </ligand>
</feature>
<feature type="binding site" evidence="1">
    <location>
        <position position="237"/>
    </location>
    <ligand>
        <name>substrate</name>
    </ligand>
</feature>
<feature type="modified residue" description="Phosphotyrosine" evidence="1">
    <location>
        <position position="228"/>
    </location>
</feature>
<organism>
    <name type="scientific">Shouchella clausii (strain KSM-K16)</name>
    <name type="common">Alkalihalobacillus clausii</name>
    <dbReference type="NCBI Taxonomy" id="66692"/>
    <lineage>
        <taxon>Bacteria</taxon>
        <taxon>Bacillati</taxon>
        <taxon>Bacillota</taxon>
        <taxon>Bacilli</taxon>
        <taxon>Bacillales</taxon>
        <taxon>Bacillaceae</taxon>
        <taxon>Shouchella</taxon>
    </lineage>
</organism>
<reference key="1">
    <citation type="submission" date="2003-10" db="EMBL/GenBank/DDBJ databases">
        <title>The complete genome sequence of the alkaliphilic Bacillus clausii KSM-K16.</title>
        <authorList>
            <person name="Takaki Y."/>
            <person name="Kageyama Y."/>
            <person name="Shimamura S."/>
            <person name="Suzuki H."/>
            <person name="Nishi S."/>
            <person name="Hatada Y."/>
            <person name="Kawai S."/>
            <person name="Ito S."/>
            <person name="Horikoshi K."/>
        </authorList>
    </citation>
    <scope>NUCLEOTIDE SEQUENCE [LARGE SCALE GENOMIC DNA]</scope>
    <source>
        <strain>KSM-K16</strain>
    </source>
</reference>
<gene>
    <name evidence="1" type="primary">ldh</name>
    <name type="ordered locus">ABC2872</name>
</gene>